<gene>
    <name evidence="1" type="primary">proB</name>
    <name type="ordered locus">BWG_0224</name>
</gene>
<protein>
    <recommendedName>
        <fullName evidence="1">Glutamate 5-kinase</fullName>
        <ecNumber evidence="1">2.7.2.11</ecNumber>
    </recommendedName>
    <alternativeName>
        <fullName evidence="1">Gamma-glutamyl kinase</fullName>
        <shortName evidence="1">GK</shortName>
    </alternativeName>
</protein>
<proteinExistence type="inferred from homology"/>
<name>PROB_ECOBW</name>
<reference key="1">
    <citation type="journal article" date="2009" name="J. Bacteriol.">
        <title>Genomic sequencing reveals regulatory mutations and recombinational events in the widely used MC4100 lineage of Escherichia coli K-12.</title>
        <authorList>
            <person name="Ferenci T."/>
            <person name="Zhou Z."/>
            <person name="Betteridge T."/>
            <person name="Ren Y."/>
            <person name="Liu Y."/>
            <person name="Feng L."/>
            <person name="Reeves P.R."/>
            <person name="Wang L."/>
        </authorList>
    </citation>
    <scope>NUCLEOTIDE SEQUENCE [LARGE SCALE GENOMIC DNA]</scope>
    <source>
        <strain>K12 / MC4100 / BW2952</strain>
    </source>
</reference>
<evidence type="ECO:0000255" key="1">
    <source>
        <dbReference type="HAMAP-Rule" id="MF_00456"/>
    </source>
</evidence>
<sequence>MSDSQTLVVKLGTSVLTGGSRRLNRAHIVELVRQCAQLHAAGHRIVIVTSGAIAAGREHLGYPELPATIASKQLLAAVGQSRLIQLWEQLFSIYGIHVGQMLLTRADMEDRERFLNARDTLRALLDNNIVPVINENDAVATAEIKVGDNDNLSALAAILAGADKLLLLTDQKGLYTADPRSNPQAELIKDVYGIDDALRAIAGDSVSGLGTGGMSTKLQAADVACRAGIDTIIAAGSKPGVIGDVMEGISVGTLFHAQATPLENRKRWIFGAPPAGEITVDEGATAAILERGSSLLPKGIKSVTGNFSRGEVIRICNLEGRDIAHGVSRYNSDALRRIAGHHSQEIDAILGYEYGPVAVHRDDMITR</sequence>
<organism>
    <name type="scientific">Escherichia coli (strain K12 / MC4100 / BW2952)</name>
    <dbReference type="NCBI Taxonomy" id="595496"/>
    <lineage>
        <taxon>Bacteria</taxon>
        <taxon>Pseudomonadati</taxon>
        <taxon>Pseudomonadota</taxon>
        <taxon>Gammaproteobacteria</taxon>
        <taxon>Enterobacterales</taxon>
        <taxon>Enterobacteriaceae</taxon>
        <taxon>Escherichia</taxon>
    </lineage>
</organism>
<comment type="function">
    <text evidence="1">Catalyzes the transfer of a phosphate group to glutamate to form L-glutamate 5-phosphate.</text>
</comment>
<comment type="catalytic activity">
    <reaction evidence="1">
        <text>L-glutamate + ATP = L-glutamyl 5-phosphate + ADP</text>
        <dbReference type="Rhea" id="RHEA:14877"/>
        <dbReference type="ChEBI" id="CHEBI:29985"/>
        <dbReference type="ChEBI" id="CHEBI:30616"/>
        <dbReference type="ChEBI" id="CHEBI:58274"/>
        <dbReference type="ChEBI" id="CHEBI:456216"/>
        <dbReference type="EC" id="2.7.2.11"/>
    </reaction>
</comment>
<comment type="pathway">
    <text evidence="1">Amino-acid biosynthesis; L-proline biosynthesis; L-glutamate 5-semialdehyde from L-glutamate: step 1/2.</text>
</comment>
<comment type="subcellular location">
    <subcellularLocation>
        <location evidence="1">Cytoplasm</location>
    </subcellularLocation>
</comment>
<comment type="similarity">
    <text evidence="1">Belongs to the glutamate 5-kinase family.</text>
</comment>
<accession>C4ZT99</accession>
<dbReference type="EC" id="2.7.2.11" evidence="1"/>
<dbReference type="EMBL" id="CP001396">
    <property type="protein sequence ID" value="ACR63277.1"/>
    <property type="molecule type" value="Genomic_DNA"/>
</dbReference>
<dbReference type="RefSeq" id="WP_001285288.1">
    <property type="nucleotide sequence ID" value="NC_012759.1"/>
</dbReference>
<dbReference type="SMR" id="C4ZT99"/>
<dbReference type="GeneID" id="93777151"/>
<dbReference type="KEGG" id="ebw:BWG_0224"/>
<dbReference type="HOGENOM" id="CLU_025400_2_0_6"/>
<dbReference type="UniPathway" id="UPA00098">
    <property type="reaction ID" value="UER00359"/>
</dbReference>
<dbReference type="GO" id="GO:0005829">
    <property type="term" value="C:cytosol"/>
    <property type="evidence" value="ECO:0007669"/>
    <property type="project" value="TreeGrafter"/>
</dbReference>
<dbReference type="GO" id="GO:0005524">
    <property type="term" value="F:ATP binding"/>
    <property type="evidence" value="ECO:0007669"/>
    <property type="project" value="UniProtKB-KW"/>
</dbReference>
<dbReference type="GO" id="GO:0004349">
    <property type="term" value="F:glutamate 5-kinase activity"/>
    <property type="evidence" value="ECO:0007669"/>
    <property type="project" value="UniProtKB-UniRule"/>
</dbReference>
<dbReference type="GO" id="GO:0003723">
    <property type="term" value="F:RNA binding"/>
    <property type="evidence" value="ECO:0007669"/>
    <property type="project" value="InterPro"/>
</dbReference>
<dbReference type="GO" id="GO:0055129">
    <property type="term" value="P:L-proline biosynthetic process"/>
    <property type="evidence" value="ECO:0007669"/>
    <property type="project" value="UniProtKB-UniRule"/>
</dbReference>
<dbReference type="CDD" id="cd04242">
    <property type="entry name" value="AAK_G5K_ProB"/>
    <property type="match status" value="1"/>
</dbReference>
<dbReference type="CDD" id="cd21157">
    <property type="entry name" value="PUA_G5K"/>
    <property type="match status" value="1"/>
</dbReference>
<dbReference type="FunFam" id="2.30.130.10:FF:000003">
    <property type="entry name" value="Glutamate 5-kinase"/>
    <property type="match status" value="1"/>
</dbReference>
<dbReference type="FunFam" id="3.40.1160.10:FF:000006">
    <property type="entry name" value="Glutamate 5-kinase"/>
    <property type="match status" value="1"/>
</dbReference>
<dbReference type="Gene3D" id="3.40.1160.10">
    <property type="entry name" value="Acetylglutamate kinase-like"/>
    <property type="match status" value="2"/>
</dbReference>
<dbReference type="Gene3D" id="2.30.130.10">
    <property type="entry name" value="PUA domain"/>
    <property type="match status" value="1"/>
</dbReference>
<dbReference type="HAMAP" id="MF_00456">
    <property type="entry name" value="ProB"/>
    <property type="match status" value="1"/>
</dbReference>
<dbReference type="InterPro" id="IPR036393">
    <property type="entry name" value="AceGlu_kinase-like_sf"/>
</dbReference>
<dbReference type="InterPro" id="IPR001048">
    <property type="entry name" value="Asp/Glu/Uridylate_kinase"/>
</dbReference>
<dbReference type="InterPro" id="IPR041739">
    <property type="entry name" value="G5K_ProB"/>
</dbReference>
<dbReference type="InterPro" id="IPR001057">
    <property type="entry name" value="Glu/AcGlu_kinase"/>
</dbReference>
<dbReference type="InterPro" id="IPR011529">
    <property type="entry name" value="Glu_5kinase"/>
</dbReference>
<dbReference type="InterPro" id="IPR005715">
    <property type="entry name" value="Glu_5kinase/COase_Synthase"/>
</dbReference>
<dbReference type="InterPro" id="IPR019797">
    <property type="entry name" value="Glutamate_5-kinase_CS"/>
</dbReference>
<dbReference type="InterPro" id="IPR002478">
    <property type="entry name" value="PUA"/>
</dbReference>
<dbReference type="InterPro" id="IPR015947">
    <property type="entry name" value="PUA-like_sf"/>
</dbReference>
<dbReference type="InterPro" id="IPR036974">
    <property type="entry name" value="PUA_sf"/>
</dbReference>
<dbReference type="NCBIfam" id="TIGR01027">
    <property type="entry name" value="proB"/>
    <property type="match status" value="1"/>
</dbReference>
<dbReference type="PANTHER" id="PTHR43654">
    <property type="entry name" value="GLUTAMATE 5-KINASE"/>
    <property type="match status" value="1"/>
</dbReference>
<dbReference type="PANTHER" id="PTHR43654:SF1">
    <property type="entry name" value="ISOPENTENYL PHOSPHATE KINASE"/>
    <property type="match status" value="1"/>
</dbReference>
<dbReference type="Pfam" id="PF00696">
    <property type="entry name" value="AA_kinase"/>
    <property type="match status" value="1"/>
</dbReference>
<dbReference type="Pfam" id="PF01472">
    <property type="entry name" value="PUA"/>
    <property type="match status" value="1"/>
</dbReference>
<dbReference type="PIRSF" id="PIRSF000729">
    <property type="entry name" value="GK"/>
    <property type="match status" value="1"/>
</dbReference>
<dbReference type="PRINTS" id="PR00474">
    <property type="entry name" value="GLU5KINASE"/>
</dbReference>
<dbReference type="SMART" id="SM00359">
    <property type="entry name" value="PUA"/>
    <property type="match status" value="1"/>
</dbReference>
<dbReference type="SUPFAM" id="SSF53633">
    <property type="entry name" value="Carbamate kinase-like"/>
    <property type="match status" value="1"/>
</dbReference>
<dbReference type="SUPFAM" id="SSF88697">
    <property type="entry name" value="PUA domain-like"/>
    <property type="match status" value="1"/>
</dbReference>
<dbReference type="PROSITE" id="PS00902">
    <property type="entry name" value="GLUTAMATE_5_KINASE"/>
    <property type="match status" value="1"/>
</dbReference>
<dbReference type="PROSITE" id="PS50890">
    <property type="entry name" value="PUA"/>
    <property type="match status" value="1"/>
</dbReference>
<feature type="chain" id="PRO_1000206269" description="Glutamate 5-kinase">
    <location>
        <begin position="1"/>
        <end position="367"/>
    </location>
</feature>
<feature type="domain" description="PUA" evidence="1">
    <location>
        <begin position="275"/>
        <end position="353"/>
    </location>
</feature>
<feature type="binding site" evidence="1">
    <location>
        <position position="10"/>
    </location>
    <ligand>
        <name>ATP</name>
        <dbReference type="ChEBI" id="CHEBI:30616"/>
    </ligand>
</feature>
<feature type="binding site" evidence="1">
    <location>
        <position position="50"/>
    </location>
    <ligand>
        <name>substrate</name>
    </ligand>
</feature>
<feature type="binding site" evidence="1">
    <location>
        <position position="137"/>
    </location>
    <ligand>
        <name>substrate</name>
    </ligand>
</feature>
<feature type="binding site" evidence="1">
    <location>
        <position position="149"/>
    </location>
    <ligand>
        <name>substrate</name>
    </ligand>
</feature>
<feature type="binding site" evidence="1">
    <location>
        <begin position="169"/>
        <end position="170"/>
    </location>
    <ligand>
        <name>ATP</name>
        <dbReference type="ChEBI" id="CHEBI:30616"/>
    </ligand>
</feature>
<feature type="binding site" evidence="1">
    <location>
        <begin position="211"/>
        <end position="217"/>
    </location>
    <ligand>
        <name>ATP</name>
        <dbReference type="ChEBI" id="CHEBI:30616"/>
    </ligand>
</feature>
<keyword id="KW-0028">Amino-acid biosynthesis</keyword>
<keyword id="KW-0067">ATP-binding</keyword>
<keyword id="KW-0963">Cytoplasm</keyword>
<keyword id="KW-0418">Kinase</keyword>
<keyword id="KW-0547">Nucleotide-binding</keyword>
<keyword id="KW-0641">Proline biosynthesis</keyword>
<keyword id="KW-0808">Transferase</keyword>